<gene>
    <name evidence="1" type="primary">floA</name>
    <name type="ordered locus">BMD_4543</name>
</gene>
<feature type="chain" id="PRO_0000232548" description="Flotillin-like protein FloA">
    <location>
        <begin position="1"/>
        <end position="327"/>
    </location>
</feature>
<feature type="transmembrane region" description="Helical" evidence="1">
    <location>
        <begin position="6"/>
        <end position="26"/>
    </location>
</feature>
<feature type="transmembrane region" description="Helical" evidence="1">
    <location>
        <begin position="28"/>
        <end position="48"/>
    </location>
</feature>
<feature type="sequence conflict" description="In Ref. 1; CAA12151." evidence="3" ref="1">
    <original>A</original>
    <variation>R</variation>
    <location>
        <position position="242"/>
    </location>
</feature>
<reference key="1">
    <citation type="journal article" date="1998" name="J. Gen. Appl. Microbiol.">
        <title>Molecular characterization of the operon comprising the spoIV gene of Bacillus megaterium DSM319 and generation of a deletion mutant.</title>
        <authorList>
            <person name="Wittchen K.-D."/>
            <person name="Strey J."/>
            <person name="Bueltmann A."/>
            <person name="Reichenberg S."/>
            <person name="Meinhardt F."/>
        </authorList>
    </citation>
    <scope>NUCLEOTIDE SEQUENCE [GENOMIC DNA]</scope>
    <scope>INDUCTION</scope>
    <source>
        <strain>DSM 319 / IMG 1521</strain>
    </source>
</reference>
<reference key="2">
    <citation type="journal article" date="2011" name="J. Bacteriol.">
        <title>Genome sequences of the biotechnologically important Bacillus megaterium strains QM B1551 and DSM319.</title>
        <authorList>
            <person name="Eppinger M."/>
            <person name="Bunk B."/>
            <person name="Johns M.A."/>
            <person name="Edirisinghe J.N."/>
            <person name="Kutumbaka K.K."/>
            <person name="Koenig S.S."/>
            <person name="Creasy H.H."/>
            <person name="Rosovitz M.J."/>
            <person name="Riley D.R."/>
            <person name="Daugherty S."/>
            <person name="Martin M."/>
            <person name="Elbourne L.D."/>
            <person name="Paulsen I."/>
            <person name="Biedendieck R."/>
            <person name="Braun C."/>
            <person name="Grayburn S."/>
            <person name="Dhingra S."/>
            <person name="Lukyanchuk V."/>
            <person name="Ball B."/>
            <person name="Ul-Qamar R."/>
            <person name="Seibel J."/>
            <person name="Bremer E."/>
            <person name="Jahn D."/>
            <person name="Ravel J."/>
            <person name="Vary P.S."/>
        </authorList>
    </citation>
    <scope>NUCLEOTIDE SEQUENCE [LARGE SCALE GENOMIC DNA]</scope>
    <source>
        <strain>DSM 319 / IMG 1521</strain>
    </source>
</reference>
<proteinExistence type="evidence at transcript level"/>
<organism>
    <name type="scientific">Priestia megaterium (strain DSM 319 / IMG 1521)</name>
    <name type="common">Bacillus megaterium</name>
    <dbReference type="NCBI Taxonomy" id="592022"/>
    <lineage>
        <taxon>Bacteria</taxon>
        <taxon>Bacillati</taxon>
        <taxon>Bacillota</taxon>
        <taxon>Bacilli</taxon>
        <taxon>Bacillales</taxon>
        <taxon>Bacillaceae</taxon>
        <taxon>Priestia</taxon>
    </lineage>
</organism>
<comment type="function">
    <text evidence="1">Found in functional membrane microdomains (FMM) that may be equivalent to eukaryotic membrane rafts. FMMs are highly dynamic and increase in number as cells age. Flotillins are thought to be important factors in membrane fluidity.</text>
</comment>
<comment type="subunit">
    <text evidence="1">Homooligomerizes.</text>
</comment>
<comment type="subcellular location">
    <subcellularLocation>
        <location evidence="1">Cell membrane</location>
        <topology evidence="1">Multi-pass membrane protein</topology>
    </subcellularLocation>
    <subcellularLocation>
        <location evidence="1">Membrane raft</location>
        <topology evidence="1">Multi-pass membrane protein</topology>
    </subcellularLocation>
</comment>
<comment type="induction">
    <text evidence="2">Expressed during sporulation stages IV/V, part of an operon with downstream gene BMD_4542.</text>
</comment>
<comment type="similarity">
    <text evidence="1">Belongs to the flotillin-like FloA family.</text>
</comment>
<protein>
    <recommendedName>
        <fullName evidence="1">Flotillin-like protein FloA</fullName>
    </recommendedName>
</protein>
<sequence>MEVGSVLFFVVIGLAIIALAVFFTFVPIMLWISALAAGVRISIFTLVGMRLRRVIPSRVVNPLIKASKAGLGITINQLESHYLAGGNVDRVVNALIAAHRANIELTFERGAAIDLAGRDVLEAVQMSVNPKVIETPFIAGVAMDGIEVKAKARITVRANIDRLVGGAGEETIIARVGEGIVSTIGSQTDHKKVLENPDMISQTVLGKGLDSGTAFEILSIDIADIDIGKNIGAVLQTDQAEADKNIAQAKAEERRAMAVAQEQEMRAKVEEMRAKVVEAEAEVPLAMAEALRSGNIGVMDYMNIQNLTADTDMRDSIGKMSKEDDEK</sequence>
<evidence type="ECO:0000255" key="1">
    <source>
        <dbReference type="HAMAP-Rule" id="MF_01562"/>
    </source>
</evidence>
<evidence type="ECO:0000269" key="2">
    <source>
    </source>
</evidence>
<evidence type="ECO:0000305" key="3"/>
<accession>Q9ZEF9</accession>
<accession>D5DMN5</accession>
<name>FLOA_PRIM3</name>
<dbReference type="EMBL" id="AJ224829">
    <property type="protein sequence ID" value="CAA12151.1"/>
    <property type="molecule type" value="Genomic_DNA"/>
</dbReference>
<dbReference type="EMBL" id="CP001982">
    <property type="protein sequence ID" value="ADF41367.1"/>
    <property type="molecule type" value="Genomic_DNA"/>
</dbReference>
<dbReference type="RefSeq" id="WP_013085055.1">
    <property type="nucleotide sequence ID" value="NZ_CP120609.1"/>
</dbReference>
<dbReference type="SMR" id="Q9ZEF9"/>
<dbReference type="KEGG" id="bmd:BMD_4543"/>
<dbReference type="PATRIC" id="fig|592022.4.peg.4539"/>
<dbReference type="HOGENOM" id="CLU_836378_0_0_9"/>
<dbReference type="Proteomes" id="UP000002365">
    <property type="component" value="Chromosome"/>
</dbReference>
<dbReference type="GO" id="GO:0045121">
    <property type="term" value="C:membrane raft"/>
    <property type="evidence" value="ECO:0007669"/>
    <property type="project" value="UniProtKB-SubCell"/>
</dbReference>
<dbReference type="GO" id="GO:0005886">
    <property type="term" value="C:plasma membrane"/>
    <property type="evidence" value="ECO:0007669"/>
    <property type="project" value="UniProtKB-SubCell"/>
</dbReference>
<dbReference type="HAMAP" id="MF_01562">
    <property type="entry name" value="FloA"/>
    <property type="match status" value="1"/>
</dbReference>
<dbReference type="InterPro" id="IPR001107">
    <property type="entry name" value="Band_7"/>
</dbReference>
<dbReference type="InterPro" id="IPR022853">
    <property type="entry name" value="FloA"/>
</dbReference>
<dbReference type="NCBIfam" id="NF010186">
    <property type="entry name" value="PRK13665.1"/>
    <property type="match status" value="1"/>
</dbReference>
<dbReference type="Pfam" id="PF12127">
    <property type="entry name" value="FloA"/>
    <property type="match status" value="1"/>
</dbReference>
<dbReference type="SMART" id="SM00244">
    <property type="entry name" value="PHB"/>
    <property type="match status" value="1"/>
</dbReference>
<keyword id="KW-1003">Cell membrane</keyword>
<keyword id="KW-0472">Membrane</keyword>
<keyword id="KW-0812">Transmembrane</keyword>
<keyword id="KW-1133">Transmembrane helix</keyword>